<feature type="chain" id="PRO_0000105288" description="Glutamyl-tRNA(Gln) amidotransferase subunit C">
    <location>
        <begin position="1"/>
        <end position="100"/>
    </location>
</feature>
<protein>
    <recommendedName>
        <fullName>Glutamyl-tRNA(Gln) amidotransferase subunit C</fullName>
        <shortName>Glu-ADT subunit C</shortName>
        <ecNumber>6.3.5.-</ecNumber>
    </recommendedName>
</protein>
<dbReference type="EC" id="6.3.5.-"/>
<dbReference type="EMBL" id="AE002160">
    <property type="protein sequence ID" value="AAF73542.1"/>
    <property type="molecule type" value="Genomic_DNA"/>
</dbReference>
<dbReference type="RefSeq" id="WP_010229992.1">
    <property type="nucleotide sequence ID" value="NZ_CP063055.1"/>
</dbReference>
<dbReference type="SMR" id="Q9PL38"/>
<dbReference type="GeneID" id="1246440"/>
<dbReference type="KEGG" id="cmu:TC_0270"/>
<dbReference type="eggNOG" id="COG0721">
    <property type="taxonomic scope" value="Bacteria"/>
</dbReference>
<dbReference type="HOGENOM" id="CLU_105899_1_2_0"/>
<dbReference type="OrthoDB" id="18187at2"/>
<dbReference type="Proteomes" id="UP000000800">
    <property type="component" value="Chromosome"/>
</dbReference>
<dbReference type="GO" id="GO:0050566">
    <property type="term" value="F:asparaginyl-tRNA synthase (glutamine-hydrolyzing) activity"/>
    <property type="evidence" value="ECO:0007669"/>
    <property type="project" value="RHEA"/>
</dbReference>
<dbReference type="GO" id="GO:0005524">
    <property type="term" value="F:ATP binding"/>
    <property type="evidence" value="ECO:0007669"/>
    <property type="project" value="UniProtKB-KW"/>
</dbReference>
<dbReference type="GO" id="GO:0050567">
    <property type="term" value="F:glutaminyl-tRNA synthase (glutamine-hydrolyzing) activity"/>
    <property type="evidence" value="ECO:0007669"/>
    <property type="project" value="UniProtKB-UniRule"/>
</dbReference>
<dbReference type="GO" id="GO:0006450">
    <property type="term" value="P:regulation of translational fidelity"/>
    <property type="evidence" value="ECO:0007669"/>
    <property type="project" value="InterPro"/>
</dbReference>
<dbReference type="GO" id="GO:0006412">
    <property type="term" value="P:translation"/>
    <property type="evidence" value="ECO:0007669"/>
    <property type="project" value="UniProtKB-UniRule"/>
</dbReference>
<dbReference type="HAMAP" id="MF_00122">
    <property type="entry name" value="GatC"/>
    <property type="match status" value="1"/>
</dbReference>
<dbReference type="InterPro" id="IPR036113">
    <property type="entry name" value="Asp/Glu-ADT_sf_sub_c"/>
</dbReference>
<dbReference type="InterPro" id="IPR003837">
    <property type="entry name" value="GatC"/>
</dbReference>
<dbReference type="NCBIfam" id="TIGR00135">
    <property type="entry name" value="gatC"/>
    <property type="match status" value="1"/>
</dbReference>
<dbReference type="Pfam" id="PF02686">
    <property type="entry name" value="GatC"/>
    <property type="match status" value="1"/>
</dbReference>
<dbReference type="SUPFAM" id="SSF141000">
    <property type="entry name" value="Glu-tRNAGln amidotransferase C subunit"/>
    <property type="match status" value="1"/>
</dbReference>
<name>GATC_CHLMU</name>
<gene>
    <name type="primary">gatC</name>
    <name type="ordered locus">TC_0270</name>
</gene>
<accession>Q9PL38</accession>
<comment type="function">
    <text evidence="1">Allows the formation of correctly charged Asn-tRNA(Asn) or Gln-tRNA(Gln) through the transamidation of misacylated Asp-tRNA(Asn) or Glu-tRNA(Gln) in organisms which lack either or both of asparaginyl-tRNA or glutaminyl-tRNA synthetases. The reaction takes place in the presence of glutamine and ATP through an activated phospho-Asp-tRNA(Asn) or phospho-Glu-tRNA(Gln) (By similarity).</text>
</comment>
<comment type="catalytic activity">
    <reaction>
        <text>L-glutamyl-tRNA(Gln) + L-glutamine + ATP + H2O = L-glutaminyl-tRNA(Gln) + L-glutamate + ADP + phosphate + H(+)</text>
        <dbReference type="Rhea" id="RHEA:17521"/>
        <dbReference type="Rhea" id="RHEA-COMP:9681"/>
        <dbReference type="Rhea" id="RHEA-COMP:9684"/>
        <dbReference type="ChEBI" id="CHEBI:15377"/>
        <dbReference type="ChEBI" id="CHEBI:15378"/>
        <dbReference type="ChEBI" id="CHEBI:29985"/>
        <dbReference type="ChEBI" id="CHEBI:30616"/>
        <dbReference type="ChEBI" id="CHEBI:43474"/>
        <dbReference type="ChEBI" id="CHEBI:58359"/>
        <dbReference type="ChEBI" id="CHEBI:78520"/>
        <dbReference type="ChEBI" id="CHEBI:78521"/>
        <dbReference type="ChEBI" id="CHEBI:456216"/>
    </reaction>
</comment>
<comment type="catalytic activity">
    <reaction>
        <text>L-aspartyl-tRNA(Asn) + L-glutamine + ATP + H2O = L-asparaginyl-tRNA(Asn) + L-glutamate + ADP + phosphate + 2 H(+)</text>
        <dbReference type="Rhea" id="RHEA:14513"/>
        <dbReference type="Rhea" id="RHEA-COMP:9674"/>
        <dbReference type="Rhea" id="RHEA-COMP:9677"/>
        <dbReference type="ChEBI" id="CHEBI:15377"/>
        <dbReference type="ChEBI" id="CHEBI:15378"/>
        <dbReference type="ChEBI" id="CHEBI:29985"/>
        <dbReference type="ChEBI" id="CHEBI:30616"/>
        <dbReference type="ChEBI" id="CHEBI:43474"/>
        <dbReference type="ChEBI" id="CHEBI:58359"/>
        <dbReference type="ChEBI" id="CHEBI:78515"/>
        <dbReference type="ChEBI" id="CHEBI:78516"/>
        <dbReference type="ChEBI" id="CHEBI:456216"/>
    </reaction>
</comment>
<comment type="subunit">
    <text evidence="1">Heterotrimer of A, B and C subunits.</text>
</comment>
<comment type="similarity">
    <text evidence="2">Belongs to the GatC family.</text>
</comment>
<evidence type="ECO:0000250" key="1"/>
<evidence type="ECO:0000305" key="2"/>
<proteinExistence type="inferred from homology"/>
<organism>
    <name type="scientific">Chlamydia muridarum (strain MoPn / Nigg)</name>
    <dbReference type="NCBI Taxonomy" id="243161"/>
    <lineage>
        <taxon>Bacteria</taxon>
        <taxon>Pseudomonadati</taxon>
        <taxon>Chlamydiota</taxon>
        <taxon>Chlamydiia</taxon>
        <taxon>Chlamydiales</taxon>
        <taxon>Chlamydiaceae</taxon>
        <taxon>Chlamydia/Chlamydophila group</taxon>
        <taxon>Chlamydia</taxon>
    </lineage>
</organism>
<reference key="1">
    <citation type="journal article" date="2000" name="Nucleic Acids Res.">
        <title>Genome sequences of Chlamydia trachomatis MoPn and Chlamydia pneumoniae AR39.</title>
        <authorList>
            <person name="Read T.D."/>
            <person name="Brunham R.C."/>
            <person name="Shen C."/>
            <person name="Gill S.R."/>
            <person name="Heidelberg J.F."/>
            <person name="White O."/>
            <person name="Hickey E.K."/>
            <person name="Peterson J.D."/>
            <person name="Utterback T.R."/>
            <person name="Berry K.J."/>
            <person name="Bass S."/>
            <person name="Linher K.D."/>
            <person name="Weidman J.F."/>
            <person name="Khouri H.M."/>
            <person name="Craven B."/>
            <person name="Bowman C."/>
            <person name="Dodson R.J."/>
            <person name="Gwinn M.L."/>
            <person name="Nelson W.C."/>
            <person name="DeBoy R.T."/>
            <person name="Kolonay J.F."/>
            <person name="McClarty G."/>
            <person name="Salzberg S.L."/>
            <person name="Eisen J.A."/>
            <person name="Fraser C.M."/>
        </authorList>
    </citation>
    <scope>NUCLEOTIDE SEQUENCE [LARGE SCALE GENOMIC DNA]</scope>
    <source>
        <strain>MoPn / Nigg</strain>
    </source>
</reference>
<sequence>MTQSYVNKEEIISLAKNAALELEEAHVEEFVTSMNNVIALMQEVVAIDISDIILEATVHHFVGPEDLREDMVTSDFTREEFLANVPVSLGGLVKVPTVIK</sequence>
<keyword id="KW-0067">ATP-binding</keyword>
<keyword id="KW-0436">Ligase</keyword>
<keyword id="KW-0547">Nucleotide-binding</keyword>
<keyword id="KW-0648">Protein biosynthesis</keyword>